<proteinExistence type="inferred from homology"/>
<reference key="1">
    <citation type="journal article" date="2009" name="J. Bacteriol.">
        <title>Complete genome sequence of Rhodobacter sphaeroides KD131.</title>
        <authorList>
            <person name="Lim S.-K."/>
            <person name="Kim S.J."/>
            <person name="Cha S.H."/>
            <person name="Oh Y.-K."/>
            <person name="Rhee H.-J."/>
            <person name="Kim M.-S."/>
            <person name="Lee J.K."/>
        </authorList>
    </citation>
    <scope>NUCLEOTIDE SEQUENCE [LARGE SCALE GENOMIC DNA]</scope>
    <source>
        <strain>KD131 / KCTC 12085</strain>
    </source>
</reference>
<name>HSLU_CERSK</name>
<dbReference type="EMBL" id="CP001150">
    <property type="protein sequence ID" value="ACM02784.1"/>
    <property type="molecule type" value="Genomic_DNA"/>
</dbReference>
<dbReference type="RefSeq" id="WP_015921760.1">
    <property type="nucleotide sequence ID" value="NC_011963.1"/>
</dbReference>
<dbReference type="SMR" id="B9KRH0"/>
<dbReference type="GeneID" id="67448295"/>
<dbReference type="KEGG" id="rsk:RSKD131_2924"/>
<dbReference type="HOGENOM" id="CLU_033123_0_0_5"/>
<dbReference type="GO" id="GO:0009376">
    <property type="term" value="C:HslUV protease complex"/>
    <property type="evidence" value="ECO:0007669"/>
    <property type="project" value="UniProtKB-UniRule"/>
</dbReference>
<dbReference type="GO" id="GO:0005524">
    <property type="term" value="F:ATP binding"/>
    <property type="evidence" value="ECO:0007669"/>
    <property type="project" value="UniProtKB-UniRule"/>
</dbReference>
<dbReference type="GO" id="GO:0016887">
    <property type="term" value="F:ATP hydrolysis activity"/>
    <property type="evidence" value="ECO:0007669"/>
    <property type="project" value="InterPro"/>
</dbReference>
<dbReference type="GO" id="GO:0008233">
    <property type="term" value="F:peptidase activity"/>
    <property type="evidence" value="ECO:0007669"/>
    <property type="project" value="InterPro"/>
</dbReference>
<dbReference type="GO" id="GO:0036402">
    <property type="term" value="F:proteasome-activating activity"/>
    <property type="evidence" value="ECO:0007669"/>
    <property type="project" value="UniProtKB-UniRule"/>
</dbReference>
<dbReference type="GO" id="GO:0043335">
    <property type="term" value="P:protein unfolding"/>
    <property type="evidence" value="ECO:0007669"/>
    <property type="project" value="UniProtKB-UniRule"/>
</dbReference>
<dbReference type="GO" id="GO:0051603">
    <property type="term" value="P:proteolysis involved in protein catabolic process"/>
    <property type="evidence" value="ECO:0007669"/>
    <property type="project" value="TreeGrafter"/>
</dbReference>
<dbReference type="CDD" id="cd19498">
    <property type="entry name" value="RecA-like_HslU"/>
    <property type="match status" value="1"/>
</dbReference>
<dbReference type="FunFam" id="3.40.50.300:FF:000213">
    <property type="entry name" value="ATP-dependent protease ATPase subunit HslU"/>
    <property type="match status" value="1"/>
</dbReference>
<dbReference type="FunFam" id="3.40.50.300:FF:000220">
    <property type="entry name" value="ATP-dependent protease ATPase subunit HslU"/>
    <property type="match status" value="1"/>
</dbReference>
<dbReference type="Gene3D" id="1.10.8.60">
    <property type="match status" value="1"/>
</dbReference>
<dbReference type="Gene3D" id="3.40.50.300">
    <property type="entry name" value="P-loop containing nucleotide triphosphate hydrolases"/>
    <property type="match status" value="2"/>
</dbReference>
<dbReference type="HAMAP" id="MF_00249">
    <property type="entry name" value="HslU"/>
    <property type="match status" value="1"/>
</dbReference>
<dbReference type="InterPro" id="IPR003593">
    <property type="entry name" value="AAA+_ATPase"/>
</dbReference>
<dbReference type="InterPro" id="IPR050052">
    <property type="entry name" value="ATP-dep_Clp_protease_ClpX"/>
</dbReference>
<dbReference type="InterPro" id="IPR003959">
    <property type="entry name" value="ATPase_AAA_core"/>
</dbReference>
<dbReference type="InterPro" id="IPR019489">
    <property type="entry name" value="Clp_ATPase_C"/>
</dbReference>
<dbReference type="InterPro" id="IPR004491">
    <property type="entry name" value="HslU"/>
</dbReference>
<dbReference type="InterPro" id="IPR027417">
    <property type="entry name" value="P-loop_NTPase"/>
</dbReference>
<dbReference type="NCBIfam" id="TIGR00390">
    <property type="entry name" value="hslU"/>
    <property type="match status" value="1"/>
</dbReference>
<dbReference type="NCBIfam" id="NF003544">
    <property type="entry name" value="PRK05201.1"/>
    <property type="match status" value="1"/>
</dbReference>
<dbReference type="PANTHER" id="PTHR48102">
    <property type="entry name" value="ATP-DEPENDENT CLP PROTEASE ATP-BINDING SUBUNIT CLPX-LIKE, MITOCHONDRIAL-RELATED"/>
    <property type="match status" value="1"/>
</dbReference>
<dbReference type="PANTHER" id="PTHR48102:SF3">
    <property type="entry name" value="ATP-DEPENDENT PROTEASE ATPASE SUBUNIT HSLU"/>
    <property type="match status" value="1"/>
</dbReference>
<dbReference type="Pfam" id="PF00004">
    <property type="entry name" value="AAA"/>
    <property type="match status" value="1"/>
</dbReference>
<dbReference type="Pfam" id="PF07724">
    <property type="entry name" value="AAA_2"/>
    <property type="match status" value="1"/>
</dbReference>
<dbReference type="SMART" id="SM00382">
    <property type="entry name" value="AAA"/>
    <property type="match status" value="1"/>
</dbReference>
<dbReference type="SMART" id="SM01086">
    <property type="entry name" value="ClpB_D2-small"/>
    <property type="match status" value="1"/>
</dbReference>
<dbReference type="SUPFAM" id="SSF52540">
    <property type="entry name" value="P-loop containing nucleoside triphosphate hydrolases"/>
    <property type="match status" value="1"/>
</dbReference>
<protein>
    <recommendedName>
        <fullName evidence="1">ATP-dependent protease ATPase subunit HslU</fullName>
    </recommendedName>
    <alternativeName>
        <fullName evidence="1">Unfoldase HslU</fullName>
    </alternativeName>
</protein>
<evidence type="ECO:0000255" key="1">
    <source>
        <dbReference type="HAMAP-Rule" id="MF_00249"/>
    </source>
</evidence>
<comment type="function">
    <text evidence="1">ATPase subunit of a proteasome-like degradation complex; this subunit has chaperone activity. The binding of ATP and its subsequent hydrolysis by HslU are essential for unfolding of protein substrates subsequently hydrolyzed by HslV. HslU recognizes the N-terminal part of its protein substrates and unfolds these before they are guided to HslV for hydrolysis.</text>
</comment>
<comment type="subunit">
    <text evidence="1">A double ring-shaped homohexamer of HslV is capped on each side by a ring-shaped HslU homohexamer. The assembly of the HslU/HslV complex is dependent on binding of ATP.</text>
</comment>
<comment type="subcellular location">
    <subcellularLocation>
        <location evidence="1">Cytoplasm</location>
    </subcellularLocation>
</comment>
<comment type="similarity">
    <text evidence="1">Belongs to the ClpX chaperone family. HslU subfamily.</text>
</comment>
<accession>B9KRH0</accession>
<gene>
    <name evidence="1" type="primary">hslU</name>
    <name type="ordered locus">RSKD131_2924</name>
</gene>
<feature type="chain" id="PRO_1000125448" description="ATP-dependent protease ATPase subunit HslU">
    <location>
        <begin position="1"/>
        <end position="433"/>
    </location>
</feature>
<feature type="binding site" evidence="1">
    <location>
        <position position="18"/>
    </location>
    <ligand>
        <name>ATP</name>
        <dbReference type="ChEBI" id="CHEBI:30616"/>
    </ligand>
</feature>
<feature type="binding site" evidence="1">
    <location>
        <begin position="60"/>
        <end position="65"/>
    </location>
    <ligand>
        <name>ATP</name>
        <dbReference type="ChEBI" id="CHEBI:30616"/>
    </ligand>
</feature>
<feature type="binding site" evidence="1">
    <location>
        <position position="246"/>
    </location>
    <ligand>
        <name>ATP</name>
        <dbReference type="ChEBI" id="CHEBI:30616"/>
    </ligand>
</feature>
<feature type="binding site" evidence="1">
    <location>
        <position position="311"/>
    </location>
    <ligand>
        <name>ATP</name>
        <dbReference type="ChEBI" id="CHEBI:30616"/>
    </ligand>
</feature>
<feature type="binding site" evidence="1">
    <location>
        <position position="383"/>
    </location>
    <ligand>
        <name>ATP</name>
        <dbReference type="ChEBI" id="CHEBI:30616"/>
    </ligand>
</feature>
<keyword id="KW-0067">ATP-binding</keyword>
<keyword id="KW-0143">Chaperone</keyword>
<keyword id="KW-0963">Cytoplasm</keyword>
<keyword id="KW-0547">Nucleotide-binding</keyword>
<organism>
    <name type="scientific">Cereibacter sphaeroides (strain KD131 / KCTC 12085)</name>
    <name type="common">Rhodobacter sphaeroides</name>
    <dbReference type="NCBI Taxonomy" id="557760"/>
    <lineage>
        <taxon>Bacteria</taxon>
        <taxon>Pseudomonadati</taxon>
        <taxon>Pseudomonadota</taxon>
        <taxon>Alphaproteobacteria</taxon>
        <taxon>Rhodobacterales</taxon>
        <taxon>Paracoccaceae</taxon>
        <taxon>Cereibacter</taxon>
    </lineage>
</organism>
<sequence>MTDLTPREIVSELDRFIIGQKEAKRAVAVALRNRWRRKQLADDLRDEVYPKNILMIGPTGVGKTEISRRLARLAKAPFLKVEATKFTEVGYVGRDVDSIIRDLVDAAIVETRARMREDVKARAAKAAEDRVIEAVAGRDAREQTREMFRGKLKRGELDNTVIEIDVADTSNPMQMLDPTGQGQMGMMNLGEIFGKAFGGRTQRRKMTVAESHDILMNEEADKLLDDEVVKAAALEAVQQNGIVFIDEIDKVCARSDMRGADVSREGVQRDLLPLIEGTTVSTKYGPVKTDHILFIASGAFHIAKPSDLLPELQGRLPIRVELRALTEEDFVRILSETDNALTLQYKALMQTEKVGITFTEDGIAALASIAAEVNRSVENIGARRLYTVMERVFEELSFHAPDRSGEEVTVDAAYVEKNLGELARSSDLSRYVL</sequence>